<protein>
    <recommendedName>
        <fullName evidence="1">Large ribosomal subunit protein uL13</fullName>
    </recommendedName>
    <alternativeName>
        <fullName evidence="2">50S ribosomal protein L13</fullName>
    </alternativeName>
</protein>
<organism>
    <name type="scientific">Dehalococcoides mccartyi (strain CBDB1)</name>
    <dbReference type="NCBI Taxonomy" id="255470"/>
    <lineage>
        <taxon>Bacteria</taxon>
        <taxon>Bacillati</taxon>
        <taxon>Chloroflexota</taxon>
        <taxon>Dehalococcoidia</taxon>
        <taxon>Dehalococcoidales</taxon>
        <taxon>Dehalococcoidaceae</taxon>
        <taxon>Dehalococcoides</taxon>
    </lineage>
</organism>
<sequence>MNTYTVKANDIKRDWHVIDASGRVLGEVAAEAAKYLMGKHKPMFCRNLDCGDYVVIVNAKKITVTGNKLDQKMYYRHSGFPGGFRQEKLGDLLKTKPLFVIEHAVKGMIPRNTLGAQILAKLKVYEGAEHPHASQTGVVSKES</sequence>
<accession>Q3ZZP3</accession>
<proteinExistence type="inferred from homology"/>
<keyword id="KW-0687">Ribonucleoprotein</keyword>
<keyword id="KW-0689">Ribosomal protein</keyword>
<comment type="function">
    <text evidence="1">This protein is one of the early assembly proteins of the 50S ribosomal subunit, although it is not seen to bind rRNA by itself. It is important during the early stages of 50S assembly.</text>
</comment>
<comment type="subunit">
    <text evidence="1">Part of the 50S ribosomal subunit.</text>
</comment>
<comment type="similarity">
    <text evidence="1">Belongs to the universal ribosomal protein uL13 family.</text>
</comment>
<gene>
    <name evidence="1" type="primary">rplM</name>
    <name type="ordered locus">cbdbA469</name>
</gene>
<reference key="1">
    <citation type="journal article" date="2005" name="Nat. Biotechnol.">
        <title>Genome sequence of the chlorinated compound-respiring bacterium Dehalococcoides species strain CBDB1.</title>
        <authorList>
            <person name="Kube M."/>
            <person name="Beck A."/>
            <person name="Zinder S.H."/>
            <person name="Kuhl H."/>
            <person name="Reinhardt R."/>
            <person name="Adrian L."/>
        </authorList>
    </citation>
    <scope>NUCLEOTIDE SEQUENCE [LARGE SCALE GENOMIC DNA]</scope>
    <source>
        <strain>CBDB1</strain>
    </source>
</reference>
<feature type="chain" id="PRO_1000055375" description="Large ribosomal subunit protein uL13">
    <location>
        <begin position="1"/>
        <end position="143"/>
    </location>
</feature>
<dbReference type="EMBL" id="AJ965256">
    <property type="protein sequence ID" value="CAI82670.1"/>
    <property type="molecule type" value="Genomic_DNA"/>
</dbReference>
<dbReference type="RefSeq" id="WP_011309023.1">
    <property type="nucleotide sequence ID" value="NC_007356.1"/>
</dbReference>
<dbReference type="SMR" id="Q3ZZP3"/>
<dbReference type="KEGG" id="deh:cbdbA469"/>
<dbReference type="HOGENOM" id="CLU_082184_2_2_0"/>
<dbReference type="Proteomes" id="UP000000433">
    <property type="component" value="Chromosome"/>
</dbReference>
<dbReference type="GO" id="GO:0022625">
    <property type="term" value="C:cytosolic large ribosomal subunit"/>
    <property type="evidence" value="ECO:0007669"/>
    <property type="project" value="TreeGrafter"/>
</dbReference>
<dbReference type="GO" id="GO:0003729">
    <property type="term" value="F:mRNA binding"/>
    <property type="evidence" value="ECO:0007669"/>
    <property type="project" value="TreeGrafter"/>
</dbReference>
<dbReference type="GO" id="GO:0003735">
    <property type="term" value="F:structural constituent of ribosome"/>
    <property type="evidence" value="ECO:0007669"/>
    <property type="project" value="InterPro"/>
</dbReference>
<dbReference type="GO" id="GO:0017148">
    <property type="term" value="P:negative regulation of translation"/>
    <property type="evidence" value="ECO:0007669"/>
    <property type="project" value="TreeGrafter"/>
</dbReference>
<dbReference type="GO" id="GO:0006412">
    <property type="term" value="P:translation"/>
    <property type="evidence" value="ECO:0007669"/>
    <property type="project" value="UniProtKB-UniRule"/>
</dbReference>
<dbReference type="CDD" id="cd00392">
    <property type="entry name" value="Ribosomal_L13"/>
    <property type="match status" value="1"/>
</dbReference>
<dbReference type="Gene3D" id="3.90.1180.10">
    <property type="entry name" value="Ribosomal protein L13"/>
    <property type="match status" value="1"/>
</dbReference>
<dbReference type="HAMAP" id="MF_01366">
    <property type="entry name" value="Ribosomal_uL13"/>
    <property type="match status" value="1"/>
</dbReference>
<dbReference type="InterPro" id="IPR005822">
    <property type="entry name" value="Ribosomal_uL13"/>
</dbReference>
<dbReference type="InterPro" id="IPR005823">
    <property type="entry name" value="Ribosomal_uL13_bac-type"/>
</dbReference>
<dbReference type="InterPro" id="IPR023563">
    <property type="entry name" value="Ribosomal_uL13_CS"/>
</dbReference>
<dbReference type="InterPro" id="IPR036899">
    <property type="entry name" value="Ribosomal_uL13_sf"/>
</dbReference>
<dbReference type="NCBIfam" id="TIGR01066">
    <property type="entry name" value="rplM_bact"/>
    <property type="match status" value="1"/>
</dbReference>
<dbReference type="PANTHER" id="PTHR11545:SF2">
    <property type="entry name" value="LARGE RIBOSOMAL SUBUNIT PROTEIN UL13M"/>
    <property type="match status" value="1"/>
</dbReference>
<dbReference type="PANTHER" id="PTHR11545">
    <property type="entry name" value="RIBOSOMAL PROTEIN L13"/>
    <property type="match status" value="1"/>
</dbReference>
<dbReference type="Pfam" id="PF00572">
    <property type="entry name" value="Ribosomal_L13"/>
    <property type="match status" value="1"/>
</dbReference>
<dbReference type="PIRSF" id="PIRSF002181">
    <property type="entry name" value="Ribosomal_L13"/>
    <property type="match status" value="1"/>
</dbReference>
<dbReference type="SUPFAM" id="SSF52161">
    <property type="entry name" value="Ribosomal protein L13"/>
    <property type="match status" value="1"/>
</dbReference>
<dbReference type="PROSITE" id="PS00783">
    <property type="entry name" value="RIBOSOMAL_L13"/>
    <property type="match status" value="1"/>
</dbReference>
<name>RL13_DEHMC</name>
<evidence type="ECO:0000255" key="1">
    <source>
        <dbReference type="HAMAP-Rule" id="MF_01366"/>
    </source>
</evidence>
<evidence type="ECO:0000305" key="2"/>